<proteinExistence type="inferred from homology"/>
<evidence type="ECO:0000255" key="1">
    <source>
        <dbReference type="HAMAP-Rule" id="MF_00161"/>
    </source>
</evidence>
<accession>Q73JG0</accession>
<keyword id="KW-0064">Aspartyl protease</keyword>
<keyword id="KW-0997">Cell inner membrane</keyword>
<keyword id="KW-1003">Cell membrane</keyword>
<keyword id="KW-0378">Hydrolase</keyword>
<keyword id="KW-0472">Membrane</keyword>
<keyword id="KW-0645">Protease</keyword>
<keyword id="KW-1185">Reference proteome</keyword>
<keyword id="KW-0812">Transmembrane</keyword>
<keyword id="KW-1133">Transmembrane helix</keyword>
<dbReference type="EC" id="3.4.23.36" evidence="1"/>
<dbReference type="EMBL" id="AE017226">
    <property type="protein sequence ID" value="AAS13132.1"/>
    <property type="molecule type" value="Genomic_DNA"/>
</dbReference>
<dbReference type="RefSeq" id="NP_973213.1">
    <property type="nucleotide sequence ID" value="NC_002967.9"/>
</dbReference>
<dbReference type="RefSeq" id="WP_002680623.1">
    <property type="nucleotide sequence ID" value="NC_002967.9"/>
</dbReference>
<dbReference type="SMR" id="Q73JG0"/>
<dbReference type="STRING" id="243275.TDE_2615"/>
<dbReference type="PaxDb" id="243275-TDE_2615"/>
<dbReference type="GeneID" id="2740789"/>
<dbReference type="KEGG" id="tde:TDE_2615"/>
<dbReference type="PATRIC" id="fig|243275.7.peg.2472"/>
<dbReference type="eggNOG" id="COG0597">
    <property type="taxonomic scope" value="Bacteria"/>
</dbReference>
<dbReference type="HOGENOM" id="CLU_083252_3_1_12"/>
<dbReference type="OrthoDB" id="9810259at2"/>
<dbReference type="UniPathway" id="UPA00665"/>
<dbReference type="Proteomes" id="UP000008212">
    <property type="component" value="Chromosome"/>
</dbReference>
<dbReference type="GO" id="GO:0005886">
    <property type="term" value="C:plasma membrane"/>
    <property type="evidence" value="ECO:0007669"/>
    <property type="project" value="UniProtKB-SubCell"/>
</dbReference>
<dbReference type="GO" id="GO:0004190">
    <property type="term" value="F:aspartic-type endopeptidase activity"/>
    <property type="evidence" value="ECO:0007669"/>
    <property type="project" value="UniProtKB-UniRule"/>
</dbReference>
<dbReference type="GO" id="GO:0006508">
    <property type="term" value="P:proteolysis"/>
    <property type="evidence" value="ECO:0007669"/>
    <property type="project" value="UniProtKB-KW"/>
</dbReference>
<dbReference type="HAMAP" id="MF_00161">
    <property type="entry name" value="LspA"/>
    <property type="match status" value="1"/>
</dbReference>
<dbReference type="InterPro" id="IPR001872">
    <property type="entry name" value="Peptidase_A8"/>
</dbReference>
<dbReference type="NCBIfam" id="TIGR00077">
    <property type="entry name" value="lspA"/>
    <property type="match status" value="1"/>
</dbReference>
<dbReference type="PANTHER" id="PTHR33695">
    <property type="entry name" value="LIPOPROTEIN SIGNAL PEPTIDASE"/>
    <property type="match status" value="1"/>
</dbReference>
<dbReference type="PANTHER" id="PTHR33695:SF1">
    <property type="entry name" value="LIPOPROTEIN SIGNAL PEPTIDASE"/>
    <property type="match status" value="1"/>
</dbReference>
<dbReference type="Pfam" id="PF01252">
    <property type="entry name" value="Peptidase_A8"/>
    <property type="match status" value="1"/>
</dbReference>
<dbReference type="PRINTS" id="PR00781">
    <property type="entry name" value="LIPOSIGPTASE"/>
</dbReference>
<dbReference type="PROSITE" id="PS00855">
    <property type="entry name" value="SPASE_II"/>
    <property type="match status" value="1"/>
</dbReference>
<reference key="1">
    <citation type="journal article" date="2004" name="Proc. Natl. Acad. Sci. U.S.A.">
        <title>Comparison of the genome of the oral pathogen Treponema denticola with other spirochete genomes.</title>
        <authorList>
            <person name="Seshadri R."/>
            <person name="Myers G.S.A."/>
            <person name="Tettelin H."/>
            <person name="Eisen J.A."/>
            <person name="Heidelberg J.F."/>
            <person name="Dodson R.J."/>
            <person name="Davidsen T.M."/>
            <person name="DeBoy R.T."/>
            <person name="Fouts D.E."/>
            <person name="Haft D.H."/>
            <person name="Selengut J."/>
            <person name="Ren Q."/>
            <person name="Brinkac L.M."/>
            <person name="Madupu R."/>
            <person name="Kolonay J.F."/>
            <person name="Durkin S.A."/>
            <person name="Daugherty S.C."/>
            <person name="Shetty J."/>
            <person name="Shvartsbeyn A."/>
            <person name="Gebregeorgis E."/>
            <person name="Geer K."/>
            <person name="Tsegaye G."/>
            <person name="Malek J.A."/>
            <person name="Ayodeji B."/>
            <person name="Shatsman S."/>
            <person name="McLeod M.P."/>
            <person name="Smajs D."/>
            <person name="Howell J.K."/>
            <person name="Pal S."/>
            <person name="Amin A."/>
            <person name="Vashisth P."/>
            <person name="McNeill T.Z."/>
            <person name="Xiang Q."/>
            <person name="Sodergren E."/>
            <person name="Baca E."/>
            <person name="Weinstock G.M."/>
            <person name="Norris S.J."/>
            <person name="Fraser C.M."/>
            <person name="Paulsen I.T."/>
        </authorList>
    </citation>
    <scope>NUCLEOTIDE SEQUENCE [LARGE SCALE GENOMIC DNA]</scope>
    <source>
        <strain>ATCC 35405 / DSM 14222 / CIP 103919 / JCM 8153 / KCTC 15104</strain>
    </source>
</reference>
<protein>
    <recommendedName>
        <fullName evidence="1">Lipoprotein signal peptidase</fullName>
        <ecNumber evidence="1">3.4.23.36</ecNumber>
    </recommendedName>
    <alternativeName>
        <fullName evidence="1">Prolipoprotein signal peptidase</fullName>
    </alternativeName>
    <alternativeName>
        <fullName evidence="1">Signal peptidase II</fullName>
        <shortName evidence="1">SPase II</shortName>
    </alternativeName>
</protein>
<gene>
    <name evidence="1" type="primary">lspA</name>
    <name type="ordered locus">TDE_2615</name>
</gene>
<feature type="chain" id="PRO_0000289454" description="Lipoprotein signal peptidase">
    <location>
        <begin position="1"/>
        <end position="173"/>
    </location>
</feature>
<feature type="transmembrane region" description="Helical" evidence="1">
    <location>
        <begin position="9"/>
        <end position="29"/>
    </location>
</feature>
<feature type="transmembrane region" description="Helical" evidence="1">
    <location>
        <begin position="37"/>
        <end position="57"/>
    </location>
</feature>
<feature type="transmembrane region" description="Helical" evidence="1">
    <location>
        <begin position="70"/>
        <end position="90"/>
    </location>
</feature>
<feature type="transmembrane region" description="Helical" evidence="1">
    <location>
        <begin position="142"/>
        <end position="162"/>
    </location>
</feature>
<feature type="active site" evidence="1">
    <location>
        <position position="124"/>
    </location>
</feature>
<feature type="active site" evidence="1">
    <location>
        <position position="146"/>
    </location>
</feature>
<sequence>MNNKKDYYLPFLLTAIVIVVDQVTKILVVQYMSVNEVIPVIGDLVNLRFVYNTGAAFSLGAGFGEIARKILLVFLPFLLLIALTGAYLKSAELTRAQRWFICGILGGGFGNLIDRFFRSEGVVDFIDVKFFGILGMERWPTFNAADSFIVCCGIGLGVNLILQGIKQKKLKDS</sequence>
<organism>
    <name type="scientific">Treponema denticola (strain ATCC 35405 / DSM 14222 / CIP 103919 / JCM 8153 / KCTC 15104)</name>
    <dbReference type="NCBI Taxonomy" id="243275"/>
    <lineage>
        <taxon>Bacteria</taxon>
        <taxon>Pseudomonadati</taxon>
        <taxon>Spirochaetota</taxon>
        <taxon>Spirochaetia</taxon>
        <taxon>Spirochaetales</taxon>
        <taxon>Treponemataceae</taxon>
        <taxon>Treponema</taxon>
    </lineage>
</organism>
<name>LSPA_TREDE</name>
<comment type="function">
    <text evidence="1">This protein specifically catalyzes the removal of signal peptides from prolipoproteins.</text>
</comment>
<comment type="catalytic activity">
    <reaction evidence="1">
        <text>Release of signal peptides from bacterial membrane prolipoproteins. Hydrolyzes -Xaa-Yaa-Zaa-|-(S,diacylglyceryl)Cys-, in which Xaa is hydrophobic (preferably Leu), and Yaa (Ala or Ser) and Zaa (Gly or Ala) have small, neutral side chains.</text>
        <dbReference type="EC" id="3.4.23.36"/>
    </reaction>
</comment>
<comment type="pathway">
    <text evidence="1">Protein modification; lipoprotein biosynthesis (signal peptide cleavage).</text>
</comment>
<comment type="subcellular location">
    <subcellularLocation>
        <location evidence="1">Cell inner membrane</location>
        <topology evidence="1">Multi-pass membrane protein</topology>
    </subcellularLocation>
</comment>
<comment type="similarity">
    <text evidence="1">Belongs to the peptidase A8 family.</text>
</comment>